<comment type="function">
    <text evidence="1">Catalyzes the reversible phosphorylation of UMP to UDP.</text>
</comment>
<comment type="catalytic activity">
    <reaction evidence="1">
        <text>UMP + ATP = UDP + ADP</text>
        <dbReference type="Rhea" id="RHEA:24400"/>
        <dbReference type="ChEBI" id="CHEBI:30616"/>
        <dbReference type="ChEBI" id="CHEBI:57865"/>
        <dbReference type="ChEBI" id="CHEBI:58223"/>
        <dbReference type="ChEBI" id="CHEBI:456216"/>
        <dbReference type="EC" id="2.7.4.22"/>
    </reaction>
</comment>
<comment type="activity regulation">
    <text evidence="1">Allosterically activated by GTP. Inhibited by UTP.</text>
</comment>
<comment type="pathway">
    <text evidence="1">Pyrimidine metabolism; CTP biosynthesis via de novo pathway; UDP from UMP (UMPK route): step 1/1.</text>
</comment>
<comment type="subunit">
    <text evidence="1">Homohexamer.</text>
</comment>
<comment type="subcellular location">
    <subcellularLocation>
        <location evidence="1">Cytoplasm</location>
    </subcellularLocation>
</comment>
<comment type="similarity">
    <text evidence="1">Belongs to the UMP kinase family.</text>
</comment>
<protein>
    <recommendedName>
        <fullName evidence="1">Uridylate kinase</fullName>
        <shortName evidence="1">UK</shortName>
        <ecNumber evidence="1">2.7.4.22</ecNumber>
    </recommendedName>
    <alternativeName>
        <fullName evidence="1">Uridine monophosphate kinase</fullName>
        <shortName evidence="1">UMP kinase</shortName>
        <shortName evidence="1">UMPK</shortName>
    </alternativeName>
</protein>
<keyword id="KW-0021">Allosteric enzyme</keyword>
<keyword id="KW-0067">ATP-binding</keyword>
<keyword id="KW-0963">Cytoplasm</keyword>
<keyword id="KW-0418">Kinase</keyword>
<keyword id="KW-0547">Nucleotide-binding</keyword>
<keyword id="KW-0665">Pyrimidine biosynthesis</keyword>
<keyword id="KW-0808">Transferase</keyword>
<sequence>MEPKYQRILIKLSGEALAGEKGVGIDIPTVQAIAKEIAEVHVSGVQIALVIGGGNLWRGEPAADAGMDRVQADYTGMLGTVMNALVMADSLQHYGVDTRVQTAIPMQNVAEPYIRGRALRHLEKNRIVVFGAGIGSPYFSTDTTAALRAAEIEADAILMAKNGVDGVYNADPKKDANAVKFDELTHGEVIKRGLKIMDATASTLSMDNDIDLVVFNMNEAGNIQRVVFGEHIGTTVSNKVCD</sequence>
<proteinExistence type="inferred from homology"/>
<name>PYRH_STRP3</name>
<accession>P0DD72</accession>
<accession>P59007</accession>
<accession>P65939</accession>
<accession>Q9A151</accession>
<dbReference type="EC" id="2.7.4.22" evidence="1"/>
<dbReference type="EMBL" id="AE014074">
    <property type="protein sequence ID" value="AAM78933.1"/>
    <property type="molecule type" value="Genomic_DNA"/>
</dbReference>
<dbReference type="RefSeq" id="WP_002985765.1">
    <property type="nucleotide sequence ID" value="NC_004070.1"/>
</dbReference>
<dbReference type="SMR" id="P0DD72"/>
<dbReference type="GeneID" id="69901300"/>
<dbReference type="KEGG" id="spg:SpyM3_0326"/>
<dbReference type="HOGENOM" id="CLU_033861_0_0_9"/>
<dbReference type="UniPathway" id="UPA00159">
    <property type="reaction ID" value="UER00275"/>
</dbReference>
<dbReference type="Proteomes" id="UP000000564">
    <property type="component" value="Chromosome"/>
</dbReference>
<dbReference type="GO" id="GO:0005737">
    <property type="term" value="C:cytoplasm"/>
    <property type="evidence" value="ECO:0007669"/>
    <property type="project" value="UniProtKB-SubCell"/>
</dbReference>
<dbReference type="GO" id="GO:0005524">
    <property type="term" value="F:ATP binding"/>
    <property type="evidence" value="ECO:0007669"/>
    <property type="project" value="UniProtKB-KW"/>
</dbReference>
<dbReference type="GO" id="GO:0033862">
    <property type="term" value="F:UMP kinase activity"/>
    <property type="evidence" value="ECO:0007669"/>
    <property type="project" value="UniProtKB-EC"/>
</dbReference>
<dbReference type="GO" id="GO:0044210">
    <property type="term" value="P:'de novo' CTP biosynthetic process"/>
    <property type="evidence" value="ECO:0007669"/>
    <property type="project" value="UniProtKB-UniRule"/>
</dbReference>
<dbReference type="GO" id="GO:0006225">
    <property type="term" value="P:UDP biosynthetic process"/>
    <property type="evidence" value="ECO:0007669"/>
    <property type="project" value="TreeGrafter"/>
</dbReference>
<dbReference type="CDD" id="cd04254">
    <property type="entry name" value="AAK_UMPK-PyrH-Ec"/>
    <property type="match status" value="1"/>
</dbReference>
<dbReference type="FunFam" id="3.40.1160.10:FF:000019">
    <property type="entry name" value="Uridylate kinase"/>
    <property type="match status" value="1"/>
</dbReference>
<dbReference type="Gene3D" id="3.40.1160.10">
    <property type="entry name" value="Acetylglutamate kinase-like"/>
    <property type="match status" value="1"/>
</dbReference>
<dbReference type="HAMAP" id="MF_01220_B">
    <property type="entry name" value="PyrH_B"/>
    <property type="match status" value="1"/>
</dbReference>
<dbReference type="InterPro" id="IPR036393">
    <property type="entry name" value="AceGlu_kinase-like_sf"/>
</dbReference>
<dbReference type="InterPro" id="IPR001048">
    <property type="entry name" value="Asp/Glu/Uridylate_kinase"/>
</dbReference>
<dbReference type="InterPro" id="IPR011817">
    <property type="entry name" value="Uridylate_kinase"/>
</dbReference>
<dbReference type="InterPro" id="IPR015963">
    <property type="entry name" value="Uridylate_kinase_bac"/>
</dbReference>
<dbReference type="NCBIfam" id="TIGR02075">
    <property type="entry name" value="pyrH_bact"/>
    <property type="match status" value="1"/>
</dbReference>
<dbReference type="PANTHER" id="PTHR42833">
    <property type="entry name" value="URIDYLATE KINASE"/>
    <property type="match status" value="1"/>
</dbReference>
<dbReference type="PANTHER" id="PTHR42833:SF4">
    <property type="entry name" value="URIDYLATE KINASE PUMPKIN, CHLOROPLASTIC"/>
    <property type="match status" value="1"/>
</dbReference>
<dbReference type="Pfam" id="PF00696">
    <property type="entry name" value="AA_kinase"/>
    <property type="match status" value="1"/>
</dbReference>
<dbReference type="PIRSF" id="PIRSF005650">
    <property type="entry name" value="Uridylate_kin"/>
    <property type="match status" value="1"/>
</dbReference>
<dbReference type="SUPFAM" id="SSF53633">
    <property type="entry name" value="Carbamate kinase-like"/>
    <property type="match status" value="1"/>
</dbReference>
<evidence type="ECO:0000255" key="1">
    <source>
        <dbReference type="HAMAP-Rule" id="MF_01220"/>
    </source>
</evidence>
<feature type="chain" id="PRO_0000143895" description="Uridylate kinase">
    <location>
        <begin position="1"/>
        <end position="242"/>
    </location>
</feature>
<feature type="region of interest" description="Involved in allosteric activation by GTP" evidence="1">
    <location>
        <begin position="19"/>
        <end position="24"/>
    </location>
</feature>
<feature type="binding site" evidence="1">
    <location>
        <begin position="11"/>
        <end position="14"/>
    </location>
    <ligand>
        <name>ATP</name>
        <dbReference type="ChEBI" id="CHEBI:30616"/>
    </ligand>
</feature>
<feature type="binding site" evidence="1">
    <location>
        <position position="53"/>
    </location>
    <ligand>
        <name>UMP</name>
        <dbReference type="ChEBI" id="CHEBI:57865"/>
    </ligand>
</feature>
<feature type="binding site" evidence="1">
    <location>
        <position position="54"/>
    </location>
    <ligand>
        <name>ATP</name>
        <dbReference type="ChEBI" id="CHEBI:30616"/>
    </ligand>
</feature>
<feature type="binding site" evidence="1">
    <location>
        <position position="58"/>
    </location>
    <ligand>
        <name>ATP</name>
        <dbReference type="ChEBI" id="CHEBI:30616"/>
    </ligand>
</feature>
<feature type="binding site" evidence="1">
    <location>
        <position position="73"/>
    </location>
    <ligand>
        <name>UMP</name>
        <dbReference type="ChEBI" id="CHEBI:57865"/>
    </ligand>
</feature>
<feature type="binding site" evidence="1">
    <location>
        <begin position="134"/>
        <end position="141"/>
    </location>
    <ligand>
        <name>UMP</name>
        <dbReference type="ChEBI" id="CHEBI:57865"/>
    </ligand>
</feature>
<feature type="binding site" evidence="1">
    <location>
        <position position="162"/>
    </location>
    <ligand>
        <name>ATP</name>
        <dbReference type="ChEBI" id="CHEBI:30616"/>
    </ligand>
</feature>
<feature type="binding site" evidence="1">
    <location>
        <position position="168"/>
    </location>
    <ligand>
        <name>ATP</name>
        <dbReference type="ChEBI" id="CHEBI:30616"/>
    </ligand>
</feature>
<feature type="binding site" evidence="1">
    <location>
        <position position="171"/>
    </location>
    <ligand>
        <name>ATP</name>
        <dbReference type="ChEBI" id="CHEBI:30616"/>
    </ligand>
</feature>
<organism>
    <name type="scientific">Streptococcus pyogenes serotype M3 (strain ATCC BAA-595 / MGAS315)</name>
    <dbReference type="NCBI Taxonomy" id="198466"/>
    <lineage>
        <taxon>Bacteria</taxon>
        <taxon>Bacillati</taxon>
        <taxon>Bacillota</taxon>
        <taxon>Bacilli</taxon>
        <taxon>Lactobacillales</taxon>
        <taxon>Streptococcaceae</taxon>
        <taxon>Streptococcus</taxon>
    </lineage>
</organism>
<reference key="1">
    <citation type="journal article" date="2002" name="Proc. Natl. Acad. Sci. U.S.A.">
        <title>Genome sequence of a serotype M3 strain of group A Streptococcus: phage-encoded toxins, the high-virulence phenotype, and clone emergence.</title>
        <authorList>
            <person name="Beres S.B."/>
            <person name="Sylva G.L."/>
            <person name="Barbian K.D."/>
            <person name="Lei B."/>
            <person name="Hoff J.S."/>
            <person name="Mammarella N.D."/>
            <person name="Liu M.-Y."/>
            <person name="Smoot J.C."/>
            <person name="Porcella S.F."/>
            <person name="Parkins L.D."/>
            <person name="Campbell D.S."/>
            <person name="Smith T.M."/>
            <person name="McCormick J.K."/>
            <person name="Leung D.Y.M."/>
            <person name="Schlievert P.M."/>
            <person name="Musser J.M."/>
        </authorList>
    </citation>
    <scope>NUCLEOTIDE SEQUENCE [LARGE SCALE GENOMIC DNA]</scope>
    <source>
        <strain>ATCC BAA-595 / MGAS315</strain>
    </source>
</reference>
<gene>
    <name evidence="1" type="primary">pyrH</name>
    <name type="ordered locus">SpyM3_0326</name>
</gene>